<keyword id="KW-0002">3D-structure</keyword>
<keyword id="KW-0119">Carbohydrate metabolism</keyword>
<keyword id="KW-0129">CBS domain</keyword>
<keyword id="KW-0413">Isomerase</keyword>
<keyword id="KW-0448">Lipopolysaccharide biosynthesis</keyword>
<keyword id="KW-0479">Metal-binding</keyword>
<keyword id="KW-1185">Reference proteome</keyword>
<keyword id="KW-0677">Repeat</keyword>
<keyword id="KW-0862">Zinc</keyword>
<proteinExistence type="evidence at protein level"/>
<protein>
    <recommendedName>
        <fullName>Arabinose 5-phosphate isomerase KdsD</fullName>
        <shortName>API</shortName>
        <shortName>L-API</shortName>
        <ecNumber evidence="4 8">5.3.1.13</ecNumber>
    </recommendedName>
</protein>
<feature type="chain" id="PRO_0000136575" description="Arabinose 5-phosphate isomerase KdsD">
    <location>
        <begin position="1"/>
        <end position="328"/>
    </location>
</feature>
<feature type="domain" description="SIS" evidence="3">
    <location>
        <begin position="42"/>
        <end position="184"/>
    </location>
</feature>
<feature type="domain" description="CBS 1" evidence="2">
    <location>
        <begin position="210"/>
        <end position="268"/>
    </location>
</feature>
<feature type="domain" description="CBS 2" evidence="2">
    <location>
        <begin position="277"/>
        <end position="328"/>
    </location>
</feature>
<feature type="binding site" evidence="1">
    <location>
        <begin position="75"/>
        <end position="76"/>
    </location>
    <ligand>
        <name>substrate</name>
    </ligand>
</feature>
<feature type="binding site" evidence="1">
    <location>
        <position position="82"/>
    </location>
    <ligand>
        <name>substrate</name>
    </ligand>
</feature>
<feature type="binding site" evidence="1">
    <location>
        <position position="82"/>
    </location>
    <ligand>
        <name>Zn(2+)</name>
        <dbReference type="ChEBI" id="CHEBI:29105"/>
    </ligand>
</feature>
<feature type="binding site" evidence="1">
    <location>
        <position position="88"/>
    </location>
    <ligand>
        <name>substrate</name>
    </ligand>
</feature>
<feature type="binding site" evidence="1">
    <location>
        <begin position="114"/>
        <end position="123"/>
    </location>
    <ligand>
        <name>substrate</name>
    </ligand>
</feature>
<feature type="binding site" evidence="1">
    <location>
        <begin position="148"/>
        <end position="150"/>
    </location>
    <ligand>
        <name>substrate</name>
    </ligand>
</feature>
<feature type="binding site" evidence="1">
    <location>
        <position position="222"/>
    </location>
    <ligand>
        <name>substrate</name>
    </ligand>
</feature>
<feature type="binding site" evidence="1">
    <location>
        <position position="275"/>
    </location>
    <ligand>
        <name>substrate</name>
    </ligand>
</feature>
<feature type="site" description="Catalytically relevant">
    <location>
        <position position="59"/>
    </location>
</feature>
<feature type="site" description="Catalytically relevant">
    <location>
        <position position="111"/>
    </location>
</feature>
<feature type="site" description="Catalytically relevant">
    <location>
        <position position="152"/>
    </location>
</feature>
<feature type="site" description="Catalytically relevant">
    <location>
        <position position="193"/>
    </location>
</feature>
<feature type="mutagenesis site" description="Inactive." evidence="7">
    <original>K</original>
    <variation>A</variation>
    <location>
        <position position="59"/>
    </location>
</feature>
<feature type="mutagenesis site" description="Shows 9.5% of residual activity compared to the wild-type." evidence="9">
    <original>H</original>
    <variation>A</variation>
    <location>
        <position position="88"/>
    </location>
</feature>
<feature type="mutagenesis site" description="Shows 62% of residual activity compared to the wild-type." evidence="7">
    <original>E</original>
    <variation>A</variation>
    <location>
        <position position="111"/>
    </location>
</feature>
<feature type="mutagenesis site" description="Shows 19% of residual activity compared to the wild-type. It is able to support growth." evidence="7">
    <original>E</original>
    <variation>A</variation>
    <location>
        <position position="152"/>
    </location>
</feature>
<feature type="mutagenesis site" description="Inactive." evidence="7">
    <original>H</original>
    <variation>A</variation>
    <location>
        <position position="193"/>
    </location>
</feature>
<feature type="helix" evidence="13">
    <location>
        <begin position="12"/>
        <end position="27"/>
    </location>
</feature>
<feature type="helix" evidence="13">
    <location>
        <begin position="28"/>
        <end position="32"/>
    </location>
</feature>
<feature type="helix" evidence="13">
    <location>
        <begin position="36"/>
        <end position="46"/>
    </location>
</feature>
<feature type="strand" evidence="13">
    <location>
        <begin position="52"/>
        <end position="56"/>
    </location>
</feature>
<feature type="helix" evidence="13">
    <location>
        <begin position="58"/>
        <end position="72"/>
    </location>
</feature>
<feature type="turn" evidence="13">
    <location>
        <begin position="73"/>
        <end position="75"/>
    </location>
</feature>
<feature type="strand" evidence="13">
    <location>
        <begin position="78"/>
        <end position="80"/>
    </location>
</feature>
<feature type="helix" evidence="13">
    <location>
        <begin position="85"/>
        <end position="89"/>
    </location>
</feature>
<feature type="strand" evidence="13">
    <location>
        <begin position="99"/>
        <end position="103"/>
    </location>
</feature>
<feature type="strand" evidence="13">
    <location>
        <begin position="105"/>
        <end position="107"/>
    </location>
</feature>
<feature type="helix" evidence="13">
    <location>
        <begin position="110"/>
        <end position="120"/>
    </location>
</feature>
<feature type="turn" evidence="13">
    <location>
        <begin position="121"/>
        <end position="123"/>
    </location>
</feature>
<feature type="strand" evidence="13">
    <location>
        <begin position="126"/>
        <end position="131"/>
    </location>
</feature>
<feature type="helix" evidence="13">
    <location>
        <begin position="136"/>
        <end position="140"/>
    </location>
</feature>
<feature type="strand" evidence="13">
    <location>
        <begin position="141"/>
        <end position="146"/>
    </location>
</feature>
<feature type="helix" evidence="13">
    <location>
        <begin position="162"/>
        <end position="182"/>
    </location>
</feature>
<comment type="function">
    <text evidence="4 5 6 8">Involved in the biosynthesis of 3-deoxy-D-manno-octulosonate (KDO), a unique 8-carbon sugar component of lipopolysaccharides (LPSs). KdsD is not essential in the KDO biosynthesis and can be substituted by GutQ. Catalyzes the reversible aldol-ketol isomerization between D-ribulose 5-phosphate (Ru5P) and D-arabinose 5-phosphate (A5P).</text>
</comment>
<comment type="catalytic activity">
    <reaction evidence="4 8">
        <text>D-arabinose 5-phosphate = D-ribulose 5-phosphate</text>
        <dbReference type="Rhea" id="RHEA:23104"/>
        <dbReference type="ChEBI" id="CHEBI:57693"/>
        <dbReference type="ChEBI" id="CHEBI:58121"/>
        <dbReference type="EC" id="5.3.1.13"/>
    </reaction>
    <physiologicalReaction direction="left-to-right" evidence="11 12">
        <dbReference type="Rhea" id="RHEA:23105"/>
    </physiologicalReaction>
    <physiologicalReaction direction="right-to-left" evidence="11 12">
        <dbReference type="Rhea" id="RHEA:23106"/>
    </physiologicalReaction>
</comment>
<comment type="activity regulation">
    <text evidence="4 8">Completely inhibited by 10 uM of nickel, copper, cadmium and mercury ions. Inhibited by zinc with an IC(50) of 1-3 uM. Metal ion inhibition may be a mechanism to control activity in vivo.</text>
</comment>
<comment type="biophysicochemical properties">
    <kinetics>
        <KM evidence="4">0.35 mM for Ru5P (at pH 8.5 and at 37 degrees Celsius)</KM>
        <KM evidence="4">0.61 mM for A5P (at pH 8.5 and at 37 degrees Celsius)</KM>
    </kinetics>
    <phDependence>
        <text evidence="4">Optimum pH is 8.4.</text>
    </phDependence>
</comment>
<comment type="pathway">
    <text evidence="11">Carbohydrate biosynthesis; 3-deoxy-D-manno-octulosonate biosynthesis; 3-deoxy-D-manno-octulosonate from D-ribulose 5-phosphate: step 1/3.</text>
</comment>
<comment type="pathway">
    <text evidence="11">Bacterial outer membrane biogenesis; lipopolysaccharide biosynthesis.</text>
</comment>
<comment type="subunit">
    <text evidence="4 9">Homotetramer.</text>
</comment>
<comment type="similarity">
    <text evidence="10">Belongs to the SIS family. GutQ/KpsF subfamily.</text>
</comment>
<reference key="1">
    <citation type="journal article" date="1997" name="Science">
        <title>The complete genome sequence of Escherichia coli K-12.</title>
        <authorList>
            <person name="Blattner F.R."/>
            <person name="Plunkett G. III"/>
            <person name="Bloch C.A."/>
            <person name="Perna N.T."/>
            <person name="Burland V."/>
            <person name="Riley M."/>
            <person name="Collado-Vides J."/>
            <person name="Glasner J.D."/>
            <person name="Rode C.K."/>
            <person name="Mayhew G.F."/>
            <person name="Gregor J."/>
            <person name="Davis N.W."/>
            <person name="Kirkpatrick H.A."/>
            <person name="Goeden M.A."/>
            <person name="Rose D.J."/>
            <person name="Mau B."/>
            <person name="Shao Y."/>
        </authorList>
    </citation>
    <scope>NUCLEOTIDE SEQUENCE [LARGE SCALE GENOMIC DNA]</scope>
    <source>
        <strain>K12 / MG1655 / ATCC 47076</strain>
    </source>
</reference>
<reference key="2">
    <citation type="journal article" date="2006" name="Mol. Syst. Biol.">
        <title>Highly accurate genome sequences of Escherichia coli K-12 strains MG1655 and W3110.</title>
        <authorList>
            <person name="Hayashi K."/>
            <person name="Morooka N."/>
            <person name="Yamamoto Y."/>
            <person name="Fujita K."/>
            <person name="Isono K."/>
            <person name="Choi S."/>
            <person name="Ohtsubo E."/>
            <person name="Baba T."/>
            <person name="Wanner B.L."/>
            <person name="Mori H."/>
            <person name="Horiuchi T."/>
        </authorList>
    </citation>
    <scope>NUCLEOTIDE SEQUENCE [LARGE SCALE GENOMIC DNA]</scope>
    <source>
        <strain>K12 / W3110 / ATCC 27325 / DSM 5911</strain>
    </source>
</reference>
<reference key="3">
    <citation type="journal article" date="2003" name="J. Biol. Chem.">
        <title>Escherichia coli YrbH is a D-arabinose 5-phosphate isomerase.</title>
        <authorList>
            <person name="Meredith T.C."/>
            <person name="Woodard R.W."/>
        </authorList>
    </citation>
    <scope>FUNCTION AS A ARABINOSE 5-PHOSPHATE ISOMERASE AND IN LIPOPOLYSACCHARIDE BIOSYNTHESIS</scope>
    <scope>CATALYTIC ACTIVITY</scope>
    <scope>PATHWAY</scope>
    <scope>BIOPHYSICOCHEMICAL PROPERTIES</scope>
    <scope>ACTIVITY REGULATION</scope>
    <scope>SUBUNIT</scope>
    <source>
        <strain>K12</strain>
    </source>
</reference>
<reference key="4">
    <citation type="journal article" date="2005" name="J. Bacteriol.">
        <title>Identification of GutQ from Escherichia coli as a D-arabinose 5-phosphate isomerase.</title>
        <authorList>
            <person name="Meredith T.C."/>
            <person name="Woodard R.W."/>
        </authorList>
    </citation>
    <scope>FUNCTION AS A ARABINOSE 5-PHOSPHATE ISOMERASE</scope>
    <scope>NOMENCLATURE</scope>
    <source>
        <strain>K12 / MG1655 / ATCC 47076</strain>
    </source>
</reference>
<reference key="5">
    <citation type="journal article" date="2006" name="Res. Microbiol.">
        <title>Non-essential KDO biosynthesis and new essential cell envelope biogenesis genes in the Escherichia coli yrbG-yhbG locus.</title>
        <authorList>
            <person name="Sperandeo P."/>
            <person name="Pozzi C."/>
            <person name="Deho G."/>
            <person name="Polissi A."/>
        </authorList>
    </citation>
    <scope>FUNCTION IN KDO BIOSYNTHESIS</scope>
    <source>
        <strain>K12 / MG1655 / ATCC 47076</strain>
    </source>
</reference>
<reference key="6">
    <citation type="journal article" date="2009" name="Biochem. Biophys. Res. Commun.">
        <title>Structure prediction and functional analysis of KdsD, an enzyme involved in lipopolysaccharide biosynthesis.</title>
        <authorList>
            <person name="Sommaruga S."/>
            <person name="Gioia L.D."/>
            <person name="Tortora P."/>
            <person name="Polissi A."/>
        </authorList>
    </citation>
    <scope>MUTAGENESIS OF LYS-59; GLU-111; GLU-152 AND HIS-193</scope>
    <source>
        <strain>K12</strain>
    </source>
</reference>
<reference key="7">
    <citation type="journal article" date="2010" name="Chemistry">
        <title>Targeting bacterial membranes: NMR spectroscopy characterization of substrate recognition and binding requirements of D-arabinose-5-phosphate isomerase.</title>
        <authorList>
            <person name="Airoldi C."/>
            <person name="Sommaruga S."/>
            <person name="Merlo S."/>
            <person name="Sperandeo P."/>
            <person name="Cipolla L."/>
            <person name="Polissi A."/>
            <person name="Nicotra F."/>
        </authorList>
    </citation>
    <scope>FUNCTION</scope>
    <scope>CATALYTIC ACTIVITY</scope>
    <scope>REACTION MECHANISM</scope>
    <scope>ACTIVITY REGULATION</scope>
    <source>
        <strain>K12</strain>
    </source>
</reference>
<reference key="8">
    <citation type="journal article" date="2010" name="Protein Sci.">
        <title>Probing the active site of the sugar isomerase domain from E. coli arabinose-5-phosphate isomerase via X-ray crystallography.</title>
        <authorList>
            <person name="Gourlay L.J."/>
            <person name="Sommaruga S."/>
            <person name="Nardini M."/>
            <person name="Sperandeo P."/>
            <person name="Deho G."/>
            <person name="Polissi A."/>
            <person name="Bolognesi M."/>
        </authorList>
    </citation>
    <scope>X-RAY CRYSTALLOGRAPHY (2.6 ANGSTROMS) OF 1-183 OF MUTANT ALA-59</scope>
    <scope>MUTAGENESIS OF HIS-88</scope>
    <scope>SUBUNIT</scope>
    <source>
        <strain>K12</strain>
    </source>
</reference>
<name>KDSD_ECOLI</name>
<organism>
    <name type="scientific">Escherichia coli (strain K12)</name>
    <dbReference type="NCBI Taxonomy" id="83333"/>
    <lineage>
        <taxon>Bacteria</taxon>
        <taxon>Pseudomonadati</taxon>
        <taxon>Pseudomonadota</taxon>
        <taxon>Gammaproteobacteria</taxon>
        <taxon>Enterobacterales</taxon>
        <taxon>Enterobacteriaceae</taxon>
        <taxon>Escherichia</taxon>
    </lineage>
</organism>
<accession>P45395</accession>
<accession>Q2M915</accession>
<gene>
    <name type="primary">kdsD</name>
    <name type="synonym">yrbH</name>
    <name type="ordered locus">b3197</name>
    <name type="ordered locus">JW3164</name>
</gene>
<dbReference type="EC" id="5.3.1.13" evidence="4 8"/>
<dbReference type="EMBL" id="U18997">
    <property type="protein sequence ID" value="AAA57998.1"/>
    <property type="molecule type" value="Genomic_DNA"/>
</dbReference>
<dbReference type="EMBL" id="U00096">
    <property type="protein sequence ID" value="AAC76229.1"/>
    <property type="molecule type" value="Genomic_DNA"/>
</dbReference>
<dbReference type="EMBL" id="AP009048">
    <property type="protein sequence ID" value="BAE77241.1"/>
    <property type="molecule type" value="Genomic_DNA"/>
</dbReference>
<dbReference type="PIR" id="G65110">
    <property type="entry name" value="G65110"/>
</dbReference>
<dbReference type="RefSeq" id="NP_417664.1">
    <property type="nucleotide sequence ID" value="NC_000913.3"/>
</dbReference>
<dbReference type="RefSeq" id="WP_001295557.1">
    <property type="nucleotide sequence ID" value="NZ_STEB01000012.1"/>
</dbReference>
<dbReference type="PDB" id="2XHZ">
    <property type="method" value="X-ray"/>
    <property type="resolution" value="2.60 A"/>
    <property type="chains" value="A/B/C/D=1-183"/>
</dbReference>
<dbReference type="PDBsum" id="2XHZ"/>
<dbReference type="SMR" id="P45395"/>
<dbReference type="BioGRID" id="4259369">
    <property type="interactions" value="345"/>
</dbReference>
<dbReference type="BioGRID" id="852047">
    <property type="interactions" value="2"/>
</dbReference>
<dbReference type="DIP" id="DIP-12910N"/>
<dbReference type="FunCoup" id="P45395">
    <property type="interactions" value="247"/>
</dbReference>
<dbReference type="IntAct" id="P45395">
    <property type="interactions" value="9"/>
</dbReference>
<dbReference type="STRING" id="511145.b3197"/>
<dbReference type="jPOST" id="P45395"/>
<dbReference type="PaxDb" id="511145-b3197"/>
<dbReference type="EnsemblBacteria" id="AAC76229">
    <property type="protein sequence ID" value="AAC76229"/>
    <property type="gene ID" value="b3197"/>
</dbReference>
<dbReference type="GeneID" id="93778784"/>
<dbReference type="GeneID" id="947734"/>
<dbReference type="KEGG" id="ecj:JW3164"/>
<dbReference type="KEGG" id="eco:b3197"/>
<dbReference type="KEGG" id="ecoc:C3026_17400"/>
<dbReference type="PATRIC" id="fig|1411691.4.peg.3534"/>
<dbReference type="EchoBASE" id="EB2655"/>
<dbReference type="eggNOG" id="COG0517">
    <property type="taxonomic scope" value="Bacteria"/>
</dbReference>
<dbReference type="eggNOG" id="COG0794">
    <property type="taxonomic scope" value="Bacteria"/>
</dbReference>
<dbReference type="HOGENOM" id="CLU_040681_13_1_6"/>
<dbReference type="InParanoid" id="P45395"/>
<dbReference type="OMA" id="LMACLMR"/>
<dbReference type="OrthoDB" id="9762536at2"/>
<dbReference type="PhylomeDB" id="P45395"/>
<dbReference type="BioCyc" id="EcoCyc:G7662-MONOMER"/>
<dbReference type="BioCyc" id="MetaCyc:G7662-MONOMER"/>
<dbReference type="BRENDA" id="5.3.1.13">
    <property type="organism ID" value="2026"/>
</dbReference>
<dbReference type="UniPathway" id="UPA00030"/>
<dbReference type="UniPathway" id="UPA00357">
    <property type="reaction ID" value="UER00473"/>
</dbReference>
<dbReference type="EvolutionaryTrace" id="P45395"/>
<dbReference type="PRO" id="PR:P45395"/>
<dbReference type="Proteomes" id="UP000000625">
    <property type="component" value="Chromosome"/>
</dbReference>
<dbReference type="GO" id="GO:0019146">
    <property type="term" value="F:arabinose-5-phosphate isomerase activity"/>
    <property type="evidence" value="ECO:0000314"/>
    <property type="project" value="EcoCyc"/>
</dbReference>
<dbReference type="GO" id="GO:0097367">
    <property type="term" value="F:carbohydrate derivative binding"/>
    <property type="evidence" value="ECO:0007669"/>
    <property type="project" value="InterPro"/>
</dbReference>
<dbReference type="GO" id="GO:0042802">
    <property type="term" value="F:identical protein binding"/>
    <property type="evidence" value="ECO:0000314"/>
    <property type="project" value="EcoCyc"/>
</dbReference>
<dbReference type="GO" id="GO:0046872">
    <property type="term" value="F:metal ion binding"/>
    <property type="evidence" value="ECO:0007669"/>
    <property type="project" value="UniProtKB-KW"/>
</dbReference>
<dbReference type="GO" id="GO:0019294">
    <property type="term" value="P:keto-3-deoxy-D-manno-octulosonic acid biosynthetic process"/>
    <property type="evidence" value="ECO:0000314"/>
    <property type="project" value="EcoCyc"/>
</dbReference>
<dbReference type="GO" id="GO:0051289">
    <property type="term" value="P:protein homotetramerization"/>
    <property type="evidence" value="ECO:0000314"/>
    <property type="project" value="EcoCyc"/>
</dbReference>
<dbReference type="CDD" id="cd04604">
    <property type="entry name" value="CBS_pair_SIS_assoc"/>
    <property type="match status" value="1"/>
</dbReference>
<dbReference type="CDD" id="cd05014">
    <property type="entry name" value="SIS_Kpsf"/>
    <property type="match status" value="1"/>
</dbReference>
<dbReference type="FunFam" id="3.10.580.10:FF:000007">
    <property type="entry name" value="Arabinose 5-phosphate isomerase"/>
    <property type="match status" value="1"/>
</dbReference>
<dbReference type="FunFam" id="3.40.50.10490:FF:000011">
    <property type="entry name" value="Arabinose 5-phosphate isomerase"/>
    <property type="match status" value="1"/>
</dbReference>
<dbReference type="Gene3D" id="3.10.580.10">
    <property type="entry name" value="CBS-domain"/>
    <property type="match status" value="1"/>
</dbReference>
<dbReference type="Gene3D" id="3.40.50.10490">
    <property type="entry name" value="Glucose-6-phosphate isomerase like protein, domain 1"/>
    <property type="match status" value="1"/>
</dbReference>
<dbReference type="InterPro" id="IPR000644">
    <property type="entry name" value="CBS_dom"/>
</dbReference>
<dbReference type="InterPro" id="IPR046342">
    <property type="entry name" value="CBS_dom_sf"/>
</dbReference>
<dbReference type="InterPro" id="IPR050986">
    <property type="entry name" value="GutQ/KpsF_isomerases"/>
</dbReference>
<dbReference type="InterPro" id="IPR004800">
    <property type="entry name" value="KdsD/KpsF-type"/>
</dbReference>
<dbReference type="InterPro" id="IPR001347">
    <property type="entry name" value="SIS_dom"/>
</dbReference>
<dbReference type="InterPro" id="IPR046348">
    <property type="entry name" value="SIS_dom_sf"/>
</dbReference>
<dbReference type="InterPro" id="IPR035474">
    <property type="entry name" value="SIS_Kpsf"/>
</dbReference>
<dbReference type="NCBIfam" id="TIGR00393">
    <property type="entry name" value="kpsF"/>
    <property type="match status" value="1"/>
</dbReference>
<dbReference type="NCBIfam" id="NF008141">
    <property type="entry name" value="PRK10892.1"/>
    <property type="match status" value="1"/>
</dbReference>
<dbReference type="PANTHER" id="PTHR42745">
    <property type="match status" value="1"/>
</dbReference>
<dbReference type="PANTHER" id="PTHR42745:SF1">
    <property type="entry name" value="ARABINOSE 5-PHOSPHATE ISOMERASE KDSD"/>
    <property type="match status" value="1"/>
</dbReference>
<dbReference type="Pfam" id="PF00571">
    <property type="entry name" value="CBS"/>
    <property type="match status" value="2"/>
</dbReference>
<dbReference type="Pfam" id="PF01380">
    <property type="entry name" value="SIS"/>
    <property type="match status" value="1"/>
</dbReference>
<dbReference type="PIRSF" id="PIRSF004692">
    <property type="entry name" value="KdsD_KpsF"/>
    <property type="match status" value="1"/>
</dbReference>
<dbReference type="SUPFAM" id="SSF53697">
    <property type="entry name" value="SIS domain"/>
    <property type="match status" value="1"/>
</dbReference>
<dbReference type="PROSITE" id="PS51371">
    <property type="entry name" value="CBS"/>
    <property type="match status" value="2"/>
</dbReference>
<dbReference type="PROSITE" id="PS51464">
    <property type="entry name" value="SIS"/>
    <property type="match status" value="1"/>
</dbReference>
<sequence>MSHVELQPGFDFQQAGKEVLAIERECLAELDQYINQNFTLACEKMFWCKGKVVVMGMGKSGHIGRKMAATFASTGTPSFFVHPGEAAHGDLGMVTPQDVVIAISNSGESSEITALIPVLKRLHVPLICITGRPESSMARAADVHLCVKVAKEACPLGLAPTSSTTATLVMGDALAVALLKARGFTAEDFALSHPGGALGRKLLLRVNDIMHTGDEIPHVKKTASLRDALLEVTRKNLGMTVICDDNMMIEGIFTDGDLRRVFDMGVDVRQLSIADVMTPGGIRVRPGILAVEALNLMQSRHITSVMVADGDHLLGVLHMHDLLRAGVV</sequence>
<evidence type="ECO:0000250" key="1"/>
<evidence type="ECO:0000255" key="2">
    <source>
        <dbReference type="PROSITE-ProRule" id="PRU00703"/>
    </source>
</evidence>
<evidence type="ECO:0000255" key="3">
    <source>
        <dbReference type="PROSITE-ProRule" id="PRU00797"/>
    </source>
</evidence>
<evidence type="ECO:0000269" key="4">
    <source>
    </source>
</evidence>
<evidence type="ECO:0000269" key="5">
    <source>
    </source>
</evidence>
<evidence type="ECO:0000269" key="6">
    <source>
    </source>
</evidence>
<evidence type="ECO:0000269" key="7">
    <source>
    </source>
</evidence>
<evidence type="ECO:0000269" key="8">
    <source>
    </source>
</evidence>
<evidence type="ECO:0000269" key="9">
    <source>
    </source>
</evidence>
<evidence type="ECO:0000305" key="10"/>
<evidence type="ECO:0000305" key="11">
    <source>
    </source>
</evidence>
<evidence type="ECO:0000305" key="12">
    <source>
    </source>
</evidence>
<evidence type="ECO:0007829" key="13">
    <source>
        <dbReference type="PDB" id="2XHZ"/>
    </source>
</evidence>